<feature type="chain" id="PRO_0000350005" description="Dual-specificity RNA methyltransferase RlmN">
    <location>
        <begin position="1"/>
        <end position="368"/>
    </location>
</feature>
<feature type="domain" description="Radical SAM core" evidence="2">
    <location>
        <begin position="100"/>
        <end position="334"/>
    </location>
</feature>
<feature type="active site" description="Proton acceptor" evidence="1">
    <location>
        <position position="94"/>
    </location>
</feature>
<feature type="active site" description="S-methylcysteine intermediate" evidence="1">
    <location>
        <position position="339"/>
    </location>
</feature>
<feature type="binding site" evidence="1">
    <location>
        <position position="114"/>
    </location>
    <ligand>
        <name>[4Fe-4S] cluster</name>
        <dbReference type="ChEBI" id="CHEBI:49883"/>
        <note>4Fe-4S-S-AdoMet</note>
    </ligand>
</feature>
<feature type="binding site" evidence="1">
    <location>
        <position position="118"/>
    </location>
    <ligand>
        <name>[4Fe-4S] cluster</name>
        <dbReference type="ChEBI" id="CHEBI:49883"/>
        <note>4Fe-4S-S-AdoMet</note>
    </ligand>
</feature>
<feature type="binding site" evidence="1">
    <location>
        <position position="121"/>
    </location>
    <ligand>
        <name>[4Fe-4S] cluster</name>
        <dbReference type="ChEBI" id="CHEBI:49883"/>
        <note>4Fe-4S-S-AdoMet</note>
    </ligand>
</feature>
<feature type="binding site" evidence="1">
    <location>
        <begin position="163"/>
        <end position="164"/>
    </location>
    <ligand>
        <name>S-adenosyl-L-methionine</name>
        <dbReference type="ChEBI" id="CHEBI:59789"/>
    </ligand>
</feature>
<feature type="binding site" evidence="1">
    <location>
        <position position="195"/>
    </location>
    <ligand>
        <name>S-adenosyl-L-methionine</name>
        <dbReference type="ChEBI" id="CHEBI:59789"/>
    </ligand>
</feature>
<feature type="binding site" evidence="1">
    <location>
        <begin position="217"/>
        <end position="219"/>
    </location>
    <ligand>
        <name>S-adenosyl-L-methionine</name>
        <dbReference type="ChEBI" id="CHEBI:59789"/>
    </ligand>
</feature>
<feature type="binding site" evidence="1">
    <location>
        <position position="296"/>
    </location>
    <ligand>
        <name>S-adenosyl-L-methionine</name>
        <dbReference type="ChEBI" id="CHEBI:59789"/>
    </ligand>
</feature>
<feature type="disulfide bond" description="(transient)" evidence="1">
    <location>
        <begin position="107"/>
        <end position="339"/>
    </location>
</feature>
<reference key="1">
    <citation type="journal article" date="2008" name="BMC Genomics">
        <title>The genome of Aeromonas salmonicida subsp. salmonicida A449: insights into the evolution of a fish pathogen.</title>
        <authorList>
            <person name="Reith M.E."/>
            <person name="Singh R.K."/>
            <person name="Curtis B."/>
            <person name="Boyd J.M."/>
            <person name="Bouevitch A."/>
            <person name="Kimball J."/>
            <person name="Munholland J."/>
            <person name="Murphy C."/>
            <person name="Sarty D."/>
            <person name="Williams J."/>
            <person name="Nash J.H."/>
            <person name="Johnson S.C."/>
            <person name="Brown L.L."/>
        </authorList>
    </citation>
    <scope>NUCLEOTIDE SEQUENCE [LARGE SCALE GENOMIC DNA]</scope>
    <source>
        <strain>A449</strain>
    </source>
</reference>
<gene>
    <name evidence="1" type="primary">rlmN</name>
    <name type="ordered locus">ASA_2602</name>
</gene>
<proteinExistence type="inferred from homology"/>
<sequence>MMSEIKTNLLDLDRDAMRAFFVELGEKPFRADQIMKWIYHFGCDDFDQMNNVNKVLRERLKAIAEIRAPEVSREQRSSDGTIKWALQVGGQEVETVYIPEEDRATLCVSSQVGCALACKFCSTAQQGFNRNLKVSEIIGQVWRAAKIVGGKRPITNVVMMGMGEPLLNLANVIPAMRLMMDDFGYGISKRRVTISTSGVVPALDILGDQIDVALAISLHAPNDKLRSEIMPINDKYNIEDFLAGVRRYLAKSNANGGRVTVEYVLLDHINDDMQHAHELAKVLKDTPSKINLIPFNPFPGNPYGKPSNSRIDRFSKVLMEYGFTVIVRKTRGDDIDAACGQLVGEVIDRTKRTMKNRMQQDGISVKMV</sequence>
<accession>A4SP04</accession>
<dbReference type="EC" id="2.1.1.192" evidence="1"/>
<dbReference type="EMBL" id="CP000644">
    <property type="protein sequence ID" value="ABO90626.1"/>
    <property type="molecule type" value="Genomic_DNA"/>
</dbReference>
<dbReference type="SMR" id="A4SP04"/>
<dbReference type="STRING" id="29491.GCA_000820065_00279"/>
<dbReference type="KEGG" id="asa:ASA_2602"/>
<dbReference type="eggNOG" id="COG0820">
    <property type="taxonomic scope" value="Bacteria"/>
</dbReference>
<dbReference type="HOGENOM" id="CLU_029101_0_0_6"/>
<dbReference type="Proteomes" id="UP000000225">
    <property type="component" value="Chromosome"/>
</dbReference>
<dbReference type="GO" id="GO:0005737">
    <property type="term" value="C:cytoplasm"/>
    <property type="evidence" value="ECO:0007669"/>
    <property type="project" value="UniProtKB-SubCell"/>
</dbReference>
<dbReference type="GO" id="GO:0051539">
    <property type="term" value="F:4 iron, 4 sulfur cluster binding"/>
    <property type="evidence" value="ECO:0007669"/>
    <property type="project" value="UniProtKB-UniRule"/>
</dbReference>
<dbReference type="GO" id="GO:0046872">
    <property type="term" value="F:metal ion binding"/>
    <property type="evidence" value="ECO:0007669"/>
    <property type="project" value="UniProtKB-KW"/>
</dbReference>
<dbReference type="GO" id="GO:0070040">
    <property type="term" value="F:rRNA (adenine(2503)-C2-)-methyltransferase activity"/>
    <property type="evidence" value="ECO:0007669"/>
    <property type="project" value="UniProtKB-UniRule"/>
</dbReference>
<dbReference type="GO" id="GO:0019843">
    <property type="term" value="F:rRNA binding"/>
    <property type="evidence" value="ECO:0007669"/>
    <property type="project" value="UniProtKB-UniRule"/>
</dbReference>
<dbReference type="GO" id="GO:0002935">
    <property type="term" value="F:tRNA (adenine(37)-C2)-methyltransferase activity"/>
    <property type="evidence" value="ECO:0007669"/>
    <property type="project" value="UniProtKB-UniRule"/>
</dbReference>
<dbReference type="GO" id="GO:0000049">
    <property type="term" value="F:tRNA binding"/>
    <property type="evidence" value="ECO:0007669"/>
    <property type="project" value="UniProtKB-UniRule"/>
</dbReference>
<dbReference type="GO" id="GO:0070475">
    <property type="term" value="P:rRNA base methylation"/>
    <property type="evidence" value="ECO:0007669"/>
    <property type="project" value="UniProtKB-UniRule"/>
</dbReference>
<dbReference type="GO" id="GO:0030488">
    <property type="term" value="P:tRNA methylation"/>
    <property type="evidence" value="ECO:0007669"/>
    <property type="project" value="UniProtKB-UniRule"/>
</dbReference>
<dbReference type="CDD" id="cd01335">
    <property type="entry name" value="Radical_SAM"/>
    <property type="match status" value="1"/>
</dbReference>
<dbReference type="FunFam" id="1.10.150.530:FF:000003">
    <property type="entry name" value="Dual-specificity RNA methyltransferase RlmN"/>
    <property type="match status" value="1"/>
</dbReference>
<dbReference type="FunFam" id="3.20.20.70:FF:000008">
    <property type="entry name" value="Dual-specificity RNA methyltransferase RlmN"/>
    <property type="match status" value="1"/>
</dbReference>
<dbReference type="Gene3D" id="1.10.150.530">
    <property type="match status" value="1"/>
</dbReference>
<dbReference type="Gene3D" id="3.20.20.70">
    <property type="entry name" value="Aldolase class I"/>
    <property type="match status" value="1"/>
</dbReference>
<dbReference type="HAMAP" id="MF_01849">
    <property type="entry name" value="RNA_methyltr_RlmN"/>
    <property type="match status" value="1"/>
</dbReference>
<dbReference type="InterPro" id="IPR013785">
    <property type="entry name" value="Aldolase_TIM"/>
</dbReference>
<dbReference type="InterPro" id="IPR040072">
    <property type="entry name" value="Methyltransferase_A"/>
</dbReference>
<dbReference type="InterPro" id="IPR048641">
    <property type="entry name" value="RlmN_N"/>
</dbReference>
<dbReference type="InterPro" id="IPR027492">
    <property type="entry name" value="RNA_MTrfase_RlmN"/>
</dbReference>
<dbReference type="InterPro" id="IPR004383">
    <property type="entry name" value="rRNA_lsu_MTrfase_RlmN/Cfr"/>
</dbReference>
<dbReference type="InterPro" id="IPR007197">
    <property type="entry name" value="rSAM"/>
</dbReference>
<dbReference type="NCBIfam" id="NF008396">
    <property type="entry name" value="PRK11194.1"/>
    <property type="match status" value="1"/>
</dbReference>
<dbReference type="NCBIfam" id="TIGR00048">
    <property type="entry name" value="rRNA_mod_RlmN"/>
    <property type="match status" value="1"/>
</dbReference>
<dbReference type="PANTHER" id="PTHR30544">
    <property type="entry name" value="23S RRNA METHYLTRANSFERASE"/>
    <property type="match status" value="1"/>
</dbReference>
<dbReference type="PANTHER" id="PTHR30544:SF5">
    <property type="entry name" value="RADICAL SAM CORE DOMAIN-CONTAINING PROTEIN"/>
    <property type="match status" value="1"/>
</dbReference>
<dbReference type="Pfam" id="PF04055">
    <property type="entry name" value="Radical_SAM"/>
    <property type="match status" value="1"/>
</dbReference>
<dbReference type="Pfam" id="PF21016">
    <property type="entry name" value="RlmN_N"/>
    <property type="match status" value="1"/>
</dbReference>
<dbReference type="PIRSF" id="PIRSF006004">
    <property type="entry name" value="CHP00048"/>
    <property type="match status" value="1"/>
</dbReference>
<dbReference type="SFLD" id="SFLDF00275">
    <property type="entry name" value="adenosine_C2_methyltransferase"/>
    <property type="match status" value="1"/>
</dbReference>
<dbReference type="SFLD" id="SFLDS00029">
    <property type="entry name" value="Radical_SAM"/>
    <property type="match status" value="1"/>
</dbReference>
<dbReference type="SUPFAM" id="SSF102114">
    <property type="entry name" value="Radical SAM enzymes"/>
    <property type="match status" value="1"/>
</dbReference>
<dbReference type="PROSITE" id="PS51918">
    <property type="entry name" value="RADICAL_SAM"/>
    <property type="match status" value="1"/>
</dbReference>
<name>RLMN_AERS4</name>
<organism>
    <name type="scientific">Aeromonas salmonicida (strain A449)</name>
    <dbReference type="NCBI Taxonomy" id="382245"/>
    <lineage>
        <taxon>Bacteria</taxon>
        <taxon>Pseudomonadati</taxon>
        <taxon>Pseudomonadota</taxon>
        <taxon>Gammaproteobacteria</taxon>
        <taxon>Aeromonadales</taxon>
        <taxon>Aeromonadaceae</taxon>
        <taxon>Aeromonas</taxon>
    </lineage>
</organism>
<protein>
    <recommendedName>
        <fullName evidence="1">Dual-specificity RNA methyltransferase RlmN</fullName>
        <ecNumber evidence="1">2.1.1.192</ecNumber>
    </recommendedName>
    <alternativeName>
        <fullName evidence="1">23S rRNA (adenine(2503)-C(2))-methyltransferase</fullName>
    </alternativeName>
    <alternativeName>
        <fullName evidence="1">23S rRNA m2A2503 methyltransferase</fullName>
    </alternativeName>
    <alternativeName>
        <fullName evidence="1">Ribosomal RNA large subunit methyltransferase N</fullName>
    </alternativeName>
    <alternativeName>
        <fullName evidence="1">tRNA (adenine(37)-C(2))-methyltransferase</fullName>
    </alternativeName>
    <alternativeName>
        <fullName evidence="1">tRNA m2A37 methyltransferase</fullName>
    </alternativeName>
</protein>
<comment type="function">
    <text evidence="1">Specifically methylates position 2 of adenine 2503 in 23S rRNA and position 2 of adenine 37 in tRNAs. m2A2503 modification seems to play a crucial role in the proofreading step occurring at the peptidyl transferase center and thus would serve to optimize ribosomal fidelity.</text>
</comment>
<comment type="catalytic activity">
    <reaction evidence="1">
        <text>adenosine(2503) in 23S rRNA + 2 reduced [2Fe-2S]-[ferredoxin] + 2 S-adenosyl-L-methionine = 2-methyladenosine(2503) in 23S rRNA + 5'-deoxyadenosine + L-methionine + 2 oxidized [2Fe-2S]-[ferredoxin] + S-adenosyl-L-homocysteine</text>
        <dbReference type="Rhea" id="RHEA:42916"/>
        <dbReference type="Rhea" id="RHEA-COMP:10000"/>
        <dbReference type="Rhea" id="RHEA-COMP:10001"/>
        <dbReference type="Rhea" id="RHEA-COMP:10152"/>
        <dbReference type="Rhea" id="RHEA-COMP:10282"/>
        <dbReference type="ChEBI" id="CHEBI:17319"/>
        <dbReference type="ChEBI" id="CHEBI:33737"/>
        <dbReference type="ChEBI" id="CHEBI:33738"/>
        <dbReference type="ChEBI" id="CHEBI:57844"/>
        <dbReference type="ChEBI" id="CHEBI:57856"/>
        <dbReference type="ChEBI" id="CHEBI:59789"/>
        <dbReference type="ChEBI" id="CHEBI:74411"/>
        <dbReference type="ChEBI" id="CHEBI:74497"/>
        <dbReference type="EC" id="2.1.1.192"/>
    </reaction>
</comment>
<comment type="catalytic activity">
    <reaction evidence="1">
        <text>adenosine(37) in tRNA + 2 reduced [2Fe-2S]-[ferredoxin] + 2 S-adenosyl-L-methionine = 2-methyladenosine(37) in tRNA + 5'-deoxyadenosine + L-methionine + 2 oxidized [2Fe-2S]-[ferredoxin] + S-adenosyl-L-homocysteine</text>
        <dbReference type="Rhea" id="RHEA:43332"/>
        <dbReference type="Rhea" id="RHEA-COMP:10000"/>
        <dbReference type="Rhea" id="RHEA-COMP:10001"/>
        <dbReference type="Rhea" id="RHEA-COMP:10162"/>
        <dbReference type="Rhea" id="RHEA-COMP:10485"/>
        <dbReference type="ChEBI" id="CHEBI:17319"/>
        <dbReference type="ChEBI" id="CHEBI:33737"/>
        <dbReference type="ChEBI" id="CHEBI:33738"/>
        <dbReference type="ChEBI" id="CHEBI:57844"/>
        <dbReference type="ChEBI" id="CHEBI:57856"/>
        <dbReference type="ChEBI" id="CHEBI:59789"/>
        <dbReference type="ChEBI" id="CHEBI:74411"/>
        <dbReference type="ChEBI" id="CHEBI:74497"/>
        <dbReference type="EC" id="2.1.1.192"/>
    </reaction>
</comment>
<comment type="cofactor">
    <cofactor evidence="1">
        <name>[4Fe-4S] cluster</name>
        <dbReference type="ChEBI" id="CHEBI:49883"/>
    </cofactor>
    <text evidence="1">Binds 1 [4Fe-4S] cluster. The cluster is coordinated with 3 cysteines and an exchangeable S-adenosyl-L-methionine.</text>
</comment>
<comment type="subcellular location">
    <subcellularLocation>
        <location evidence="1">Cytoplasm</location>
    </subcellularLocation>
</comment>
<comment type="miscellaneous">
    <text evidence="1">Reaction proceeds by a ping-pong mechanism involving intermediate methylation of a conserved cysteine residue.</text>
</comment>
<comment type="similarity">
    <text evidence="1">Belongs to the radical SAM superfamily. RlmN family.</text>
</comment>
<evidence type="ECO:0000255" key="1">
    <source>
        <dbReference type="HAMAP-Rule" id="MF_01849"/>
    </source>
</evidence>
<evidence type="ECO:0000255" key="2">
    <source>
        <dbReference type="PROSITE-ProRule" id="PRU01266"/>
    </source>
</evidence>
<keyword id="KW-0004">4Fe-4S</keyword>
<keyword id="KW-0963">Cytoplasm</keyword>
<keyword id="KW-1015">Disulfide bond</keyword>
<keyword id="KW-0408">Iron</keyword>
<keyword id="KW-0411">Iron-sulfur</keyword>
<keyword id="KW-0479">Metal-binding</keyword>
<keyword id="KW-0489">Methyltransferase</keyword>
<keyword id="KW-0698">rRNA processing</keyword>
<keyword id="KW-0949">S-adenosyl-L-methionine</keyword>
<keyword id="KW-0808">Transferase</keyword>
<keyword id="KW-0819">tRNA processing</keyword>